<sequence>MIARCIMVLGTSSGAGKSWLATALCRWFSDQGLRVAPFKAQNMSNNARVVAAPGGGQGEIGSAQYFQALAARTEPEVRMNPVLLKPEADTRSQVVLMGQVSEELTRMPWRGRSVHVWPHVAAALDALRAENDVVVIEGAGSPAEINLHANDIVNMRVARHAGAHGLLVTDIDRGGAFAHLYGTWALLPEDERALIQGFVLNKFRGDAALLAPAPDMLRERTGVPTVATIPMQWRHGLPEEDGVFDDAGHVRAGAGGAVHTTVAVVAYPRISNLDEFQPLKGVPGLRLVWARSPAEVAGADWIVLPGSKATAADLAWLRAQGLDAAIAAHAARGGRVLGICGGLQMLGEALIDTHGVDGNAPGLGLLPLVTAFDPAKTVRRTRTAFGALRGAWSALSGVAVQGYEIRHGRTAQHPAMAAAGDVAHPAIPGLAWQNARGNVLGLYLHGLFEDAVALRALFGADVPTLDAVFDRLARGVDEWFDPAWRAARRAGR</sequence>
<evidence type="ECO:0000255" key="1">
    <source>
        <dbReference type="HAMAP-Rule" id="MF_00028"/>
    </source>
</evidence>
<feature type="chain" id="PRO_0000332316" description="Cobyric acid synthase">
    <location>
        <begin position="1"/>
        <end position="492"/>
    </location>
</feature>
<feature type="domain" description="GATase cobBQ-type" evidence="1">
    <location>
        <begin position="259"/>
        <end position="453"/>
    </location>
</feature>
<feature type="active site" description="Nucleophile" evidence="1">
    <location>
        <position position="340"/>
    </location>
</feature>
<feature type="active site" evidence="1">
    <location>
        <position position="445"/>
    </location>
</feature>
<keyword id="KW-0169">Cobalamin biosynthesis</keyword>
<keyword id="KW-0315">Glutamine amidotransferase</keyword>
<organism>
    <name type="scientific">Paracidovorax citrulli (strain AAC00-1)</name>
    <name type="common">Acidovorax citrulli</name>
    <dbReference type="NCBI Taxonomy" id="397945"/>
    <lineage>
        <taxon>Bacteria</taxon>
        <taxon>Pseudomonadati</taxon>
        <taxon>Pseudomonadota</taxon>
        <taxon>Betaproteobacteria</taxon>
        <taxon>Burkholderiales</taxon>
        <taxon>Comamonadaceae</taxon>
        <taxon>Paracidovorax</taxon>
    </lineage>
</organism>
<dbReference type="EMBL" id="CP000512">
    <property type="protein sequence ID" value="ABM32141.1"/>
    <property type="molecule type" value="Genomic_DNA"/>
</dbReference>
<dbReference type="RefSeq" id="WP_011794689.1">
    <property type="nucleotide sequence ID" value="NC_008752.1"/>
</dbReference>
<dbReference type="STRING" id="397945.Aave_1552"/>
<dbReference type="KEGG" id="aav:Aave_1552"/>
<dbReference type="eggNOG" id="COG1492">
    <property type="taxonomic scope" value="Bacteria"/>
</dbReference>
<dbReference type="HOGENOM" id="CLU_019250_2_1_4"/>
<dbReference type="OrthoDB" id="9808302at2"/>
<dbReference type="UniPathway" id="UPA00148"/>
<dbReference type="Proteomes" id="UP000002596">
    <property type="component" value="Chromosome"/>
</dbReference>
<dbReference type="GO" id="GO:0015420">
    <property type="term" value="F:ABC-type vitamin B12 transporter activity"/>
    <property type="evidence" value="ECO:0007669"/>
    <property type="project" value="UniProtKB-UniRule"/>
</dbReference>
<dbReference type="GO" id="GO:0003824">
    <property type="term" value="F:catalytic activity"/>
    <property type="evidence" value="ECO:0007669"/>
    <property type="project" value="InterPro"/>
</dbReference>
<dbReference type="GO" id="GO:0009236">
    <property type="term" value="P:cobalamin biosynthetic process"/>
    <property type="evidence" value="ECO:0007669"/>
    <property type="project" value="UniProtKB-UniRule"/>
</dbReference>
<dbReference type="CDD" id="cd05389">
    <property type="entry name" value="CobQ_N"/>
    <property type="match status" value="1"/>
</dbReference>
<dbReference type="CDD" id="cd01750">
    <property type="entry name" value="GATase1_CobQ"/>
    <property type="match status" value="1"/>
</dbReference>
<dbReference type="Gene3D" id="3.40.50.880">
    <property type="match status" value="1"/>
</dbReference>
<dbReference type="Gene3D" id="3.40.50.300">
    <property type="entry name" value="P-loop containing nucleotide triphosphate hydrolases"/>
    <property type="match status" value="1"/>
</dbReference>
<dbReference type="HAMAP" id="MF_00028">
    <property type="entry name" value="CobQ"/>
    <property type="match status" value="1"/>
</dbReference>
<dbReference type="InterPro" id="IPR029062">
    <property type="entry name" value="Class_I_gatase-like"/>
</dbReference>
<dbReference type="InterPro" id="IPR002586">
    <property type="entry name" value="CobQ/CobB/MinD/ParA_Nub-bd_dom"/>
</dbReference>
<dbReference type="InterPro" id="IPR033949">
    <property type="entry name" value="CobQ_GATase1"/>
</dbReference>
<dbReference type="InterPro" id="IPR047045">
    <property type="entry name" value="CobQ_N"/>
</dbReference>
<dbReference type="InterPro" id="IPR004459">
    <property type="entry name" value="CobQ_synth"/>
</dbReference>
<dbReference type="InterPro" id="IPR011698">
    <property type="entry name" value="GATase_3"/>
</dbReference>
<dbReference type="InterPro" id="IPR027417">
    <property type="entry name" value="P-loop_NTPase"/>
</dbReference>
<dbReference type="NCBIfam" id="TIGR00313">
    <property type="entry name" value="cobQ"/>
    <property type="match status" value="1"/>
</dbReference>
<dbReference type="NCBIfam" id="NF001989">
    <property type="entry name" value="PRK00784.1"/>
    <property type="match status" value="1"/>
</dbReference>
<dbReference type="PANTHER" id="PTHR21343:SF1">
    <property type="entry name" value="COBYRIC ACID SYNTHASE"/>
    <property type="match status" value="1"/>
</dbReference>
<dbReference type="PANTHER" id="PTHR21343">
    <property type="entry name" value="DETHIOBIOTIN SYNTHETASE"/>
    <property type="match status" value="1"/>
</dbReference>
<dbReference type="Pfam" id="PF01656">
    <property type="entry name" value="CbiA"/>
    <property type="match status" value="1"/>
</dbReference>
<dbReference type="Pfam" id="PF07685">
    <property type="entry name" value="GATase_3"/>
    <property type="match status" value="1"/>
</dbReference>
<dbReference type="SUPFAM" id="SSF52317">
    <property type="entry name" value="Class I glutamine amidotransferase-like"/>
    <property type="match status" value="1"/>
</dbReference>
<dbReference type="SUPFAM" id="SSF52540">
    <property type="entry name" value="P-loop containing nucleoside triphosphate hydrolases"/>
    <property type="match status" value="1"/>
</dbReference>
<dbReference type="PROSITE" id="PS51274">
    <property type="entry name" value="GATASE_COBBQ"/>
    <property type="match status" value="1"/>
</dbReference>
<gene>
    <name evidence="1" type="primary">cobQ</name>
    <name type="ordered locus">Aave_1552</name>
</gene>
<reference key="1">
    <citation type="submission" date="2006-12" db="EMBL/GenBank/DDBJ databases">
        <title>Complete sequence of Acidovorax avenae subsp. citrulli AAC00-1.</title>
        <authorList>
            <person name="Copeland A."/>
            <person name="Lucas S."/>
            <person name="Lapidus A."/>
            <person name="Barry K."/>
            <person name="Detter J.C."/>
            <person name="Glavina del Rio T."/>
            <person name="Dalin E."/>
            <person name="Tice H."/>
            <person name="Pitluck S."/>
            <person name="Kiss H."/>
            <person name="Brettin T."/>
            <person name="Bruce D."/>
            <person name="Han C."/>
            <person name="Tapia R."/>
            <person name="Gilna P."/>
            <person name="Schmutz J."/>
            <person name="Larimer F."/>
            <person name="Land M."/>
            <person name="Hauser L."/>
            <person name="Kyrpides N."/>
            <person name="Kim E."/>
            <person name="Stahl D."/>
            <person name="Richardson P."/>
        </authorList>
    </citation>
    <scope>NUCLEOTIDE SEQUENCE [LARGE SCALE GENOMIC DNA]</scope>
    <source>
        <strain>AAC00-1</strain>
    </source>
</reference>
<proteinExistence type="inferred from homology"/>
<accession>A1TMF3</accession>
<name>COBQ_PARC0</name>
<protein>
    <recommendedName>
        <fullName evidence="1">Cobyric acid synthase</fullName>
    </recommendedName>
</protein>
<comment type="function">
    <text evidence="1">Catalyzes amidations at positions B, D, E, and G on adenosylcobyrinic A,C-diamide. NH(2) groups are provided by glutamine, and one molecule of ATP is hydrogenolyzed for each amidation.</text>
</comment>
<comment type="pathway">
    <text evidence="1">Cofactor biosynthesis; adenosylcobalamin biosynthesis.</text>
</comment>
<comment type="similarity">
    <text evidence="1">Belongs to the CobB/CobQ family. CobQ subfamily.</text>
</comment>